<evidence type="ECO:0000255" key="1">
    <source>
        <dbReference type="HAMAP-Rule" id="MF_00074"/>
    </source>
</evidence>
<protein>
    <recommendedName>
        <fullName evidence="1">Ribosomal RNA small subunit methyltransferase G</fullName>
        <ecNumber evidence="1">2.1.1.170</ecNumber>
    </recommendedName>
    <alternativeName>
        <fullName evidence="1">16S rRNA 7-methylguanosine methyltransferase</fullName>
        <shortName evidence="1">16S rRNA m7G methyltransferase</shortName>
    </alternativeName>
</protein>
<sequence length="207" mass="23431">MLNKLSLLLKDAGISLTDHQKNQLIAYVNMLHKWNKAYNLTSVRDPNEMLVRHILDSIVVAPYLQGERFIDVGTGPGLPGIPLSIVRPEAHFTLLDSLGKRVRFLRQVQHELKLENIEPVQSRVEEFPSEPPFDGVISRAFASLNDMVSWCHHLPGEQGRFYALKGQMPEDEIALLPEEYQVESVVKLQVPALDGERHLVVIKANKI</sequence>
<feature type="chain" id="PRO_1000010140" description="Ribosomal RNA small subunit methyltransferase G">
    <location>
        <begin position="1"/>
        <end position="207"/>
    </location>
</feature>
<feature type="binding site" evidence="1">
    <location>
        <position position="73"/>
    </location>
    <ligand>
        <name>S-adenosyl-L-methionine</name>
        <dbReference type="ChEBI" id="CHEBI:59789"/>
    </ligand>
</feature>
<feature type="binding site" evidence="1">
    <location>
        <position position="78"/>
    </location>
    <ligand>
        <name>S-adenosyl-L-methionine</name>
        <dbReference type="ChEBI" id="CHEBI:59789"/>
    </ligand>
</feature>
<feature type="binding site" evidence="1">
    <location>
        <begin position="124"/>
        <end position="125"/>
    </location>
    <ligand>
        <name>S-adenosyl-L-methionine</name>
        <dbReference type="ChEBI" id="CHEBI:59789"/>
    </ligand>
</feature>
<feature type="binding site" evidence="1">
    <location>
        <position position="139"/>
    </location>
    <ligand>
        <name>S-adenosyl-L-methionine</name>
        <dbReference type="ChEBI" id="CHEBI:59789"/>
    </ligand>
</feature>
<name>RSMG_ECOK1</name>
<reference key="1">
    <citation type="journal article" date="2007" name="J. Bacteriol.">
        <title>The genome sequence of avian pathogenic Escherichia coli strain O1:K1:H7 shares strong similarities with human extraintestinal pathogenic E. coli genomes.</title>
        <authorList>
            <person name="Johnson T.J."/>
            <person name="Kariyawasam S."/>
            <person name="Wannemuehler Y."/>
            <person name="Mangiamele P."/>
            <person name="Johnson S.J."/>
            <person name="Doetkott C."/>
            <person name="Skyberg J.A."/>
            <person name="Lynne A.M."/>
            <person name="Johnson J.R."/>
            <person name="Nolan L.K."/>
        </authorList>
    </citation>
    <scope>NUCLEOTIDE SEQUENCE [LARGE SCALE GENOMIC DNA]</scope>
</reference>
<comment type="function">
    <text evidence="1">Specifically methylates the N7 position of guanine in position 527 of 16S rRNA.</text>
</comment>
<comment type="catalytic activity">
    <reaction evidence="1">
        <text>guanosine(527) in 16S rRNA + S-adenosyl-L-methionine = N(7)-methylguanosine(527) in 16S rRNA + S-adenosyl-L-homocysteine</text>
        <dbReference type="Rhea" id="RHEA:42732"/>
        <dbReference type="Rhea" id="RHEA-COMP:10209"/>
        <dbReference type="Rhea" id="RHEA-COMP:10210"/>
        <dbReference type="ChEBI" id="CHEBI:57856"/>
        <dbReference type="ChEBI" id="CHEBI:59789"/>
        <dbReference type="ChEBI" id="CHEBI:74269"/>
        <dbReference type="ChEBI" id="CHEBI:74480"/>
        <dbReference type="EC" id="2.1.1.170"/>
    </reaction>
</comment>
<comment type="subcellular location">
    <subcellularLocation>
        <location evidence="1">Cytoplasm</location>
    </subcellularLocation>
</comment>
<comment type="similarity">
    <text evidence="1">Belongs to the methyltransferase superfamily. RNA methyltransferase RsmG family.</text>
</comment>
<organism>
    <name type="scientific">Escherichia coli O1:K1 / APEC</name>
    <dbReference type="NCBI Taxonomy" id="405955"/>
    <lineage>
        <taxon>Bacteria</taxon>
        <taxon>Pseudomonadati</taxon>
        <taxon>Pseudomonadota</taxon>
        <taxon>Gammaproteobacteria</taxon>
        <taxon>Enterobacterales</taxon>
        <taxon>Enterobacteriaceae</taxon>
        <taxon>Escherichia</taxon>
    </lineage>
</organism>
<proteinExistence type="inferred from homology"/>
<keyword id="KW-0963">Cytoplasm</keyword>
<keyword id="KW-0489">Methyltransferase</keyword>
<keyword id="KW-1185">Reference proteome</keyword>
<keyword id="KW-0698">rRNA processing</keyword>
<keyword id="KW-0949">S-adenosyl-L-methionine</keyword>
<keyword id="KW-0808">Transferase</keyword>
<gene>
    <name evidence="1" type="primary">rsmG</name>
    <name type="ordered locus">Ecok1_37160</name>
    <name type="ORF">APECO1_2723</name>
</gene>
<accession>A1AHS0</accession>
<dbReference type="EC" id="2.1.1.170" evidence="1"/>
<dbReference type="EMBL" id="CP000468">
    <property type="protein sequence ID" value="ABJ03210.1"/>
    <property type="molecule type" value="Genomic_DNA"/>
</dbReference>
<dbReference type="RefSeq" id="WP_000932839.1">
    <property type="nucleotide sequence ID" value="NZ_CADILS010000011.1"/>
</dbReference>
<dbReference type="SMR" id="A1AHS0"/>
<dbReference type="GeneID" id="93778227"/>
<dbReference type="KEGG" id="ecv:APECO1_2723"/>
<dbReference type="HOGENOM" id="CLU_065341_2_2_6"/>
<dbReference type="Proteomes" id="UP000008216">
    <property type="component" value="Chromosome"/>
</dbReference>
<dbReference type="GO" id="GO:0005829">
    <property type="term" value="C:cytosol"/>
    <property type="evidence" value="ECO:0007669"/>
    <property type="project" value="TreeGrafter"/>
</dbReference>
<dbReference type="GO" id="GO:0070043">
    <property type="term" value="F:rRNA (guanine-N7-)-methyltransferase activity"/>
    <property type="evidence" value="ECO:0007669"/>
    <property type="project" value="UniProtKB-UniRule"/>
</dbReference>
<dbReference type="CDD" id="cd02440">
    <property type="entry name" value="AdoMet_MTases"/>
    <property type="match status" value="1"/>
</dbReference>
<dbReference type="FunFam" id="3.40.50.150:FF:000032">
    <property type="entry name" value="Ribosomal RNA small subunit methyltransferase G"/>
    <property type="match status" value="1"/>
</dbReference>
<dbReference type="Gene3D" id="3.40.50.150">
    <property type="entry name" value="Vaccinia Virus protein VP39"/>
    <property type="match status" value="1"/>
</dbReference>
<dbReference type="HAMAP" id="MF_00074">
    <property type="entry name" value="16SrRNA_methyltr_G"/>
    <property type="match status" value="1"/>
</dbReference>
<dbReference type="InterPro" id="IPR003682">
    <property type="entry name" value="rRNA_ssu_MeTfrase_G"/>
</dbReference>
<dbReference type="InterPro" id="IPR029063">
    <property type="entry name" value="SAM-dependent_MTases_sf"/>
</dbReference>
<dbReference type="NCBIfam" id="TIGR00138">
    <property type="entry name" value="rsmG_gidB"/>
    <property type="match status" value="1"/>
</dbReference>
<dbReference type="PANTHER" id="PTHR31760">
    <property type="entry name" value="S-ADENOSYL-L-METHIONINE-DEPENDENT METHYLTRANSFERASES SUPERFAMILY PROTEIN"/>
    <property type="match status" value="1"/>
</dbReference>
<dbReference type="PANTHER" id="PTHR31760:SF0">
    <property type="entry name" value="S-ADENOSYL-L-METHIONINE-DEPENDENT METHYLTRANSFERASES SUPERFAMILY PROTEIN"/>
    <property type="match status" value="1"/>
</dbReference>
<dbReference type="Pfam" id="PF02527">
    <property type="entry name" value="GidB"/>
    <property type="match status" value="1"/>
</dbReference>
<dbReference type="PIRSF" id="PIRSF003078">
    <property type="entry name" value="GidB"/>
    <property type="match status" value="1"/>
</dbReference>
<dbReference type="SUPFAM" id="SSF53335">
    <property type="entry name" value="S-adenosyl-L-methionine-dependent methyltransferases"/>
    <property type="match status" value="1"/>
</dbReference>